<accession>B7H3S1</accession>
<dbReference type="EC" id="3.1.21.10" evidence="1"/>
<dbReference type="EMBL" id="CP001172">
    <property type="protein sequence ID" value="ACJ57548.1"/>
    <property type="molecule type" value="Genomic_DNA"/>
</dbReference>
<dbReference type="RefSeq" id="WP_001128330.1">
    <property type="nucleotide sequence ID" value="NZ_CP001172.1"/>
</dbReference>
<dbReference type="SMR" id="B7H3S1"/>
<dbReference type="GeneID" id="92893740"/>
<dbReference type="HOGENOM" id="CLU_091257_2_1_6"/>
<dbReference type="Proteomes" id="UP000006924">
    <property type="component" value="Chromosome"/>
</dbReference>
<dbReference type="GO" id="GO:0005737">
    <property type="term" value="C:cytoplasm"/>
    <property type="evidence" value="ECO:0007669"/>
    <property type="project" value="UniProtKB-SubCell"/>
</dbReference>
<dbReference type="GO" id="GO:0048476">
    <property type="term" value="C:Holliday junction resolvase complex"/>
    <property type="evidence" value="ECO:0007669"/>
    <property type="project" value="UniProtKB-UniRule"/>
</dbReference>
<dbReference type="GO" id="GO:0008821">
    <property type="term" value="F:crossover junction DNA endonuclease activity"/>
    <property type="evidence" value="ECO:0007669"/>
    <property type="project" value="UniProtKB-UniRule"/>
</dbReference>
<dbReference type="GO" id="GO:0003677">
    <property type="term" value="F:DNA binding"/>
    <property type="evidence" value="ECO:0007669"/>
    <property type="project" value="UniProtKB-KW"/>
</dbReference>
<dbReference type="GO" id="GO:0000287">
    <property type="term" value="F:magnesium ion binding"/>
    <property type="evidence" value="ECO:0007669"/>
    <property type="project" value="UniProtKB-UniRule"/>
</dbReference>
<dbReference type="GO" id="GO:0006310">
    <property type="term" value="P:DNA recombination"/>
    <property type="evidence" value="ECO:0007669"/>
    <property type="project" value="UniProtKB-UniRule"/>
</dbReference>
<dbReference type="GO" id="GO:0006281">
    <property type="term" value="P:DNA repair"/>
    <property type="evidence" value="ECO:0007669"/>
    <property type="project" value="UniProtKB-UniRule"/>
</dbReference>
<dbReference type="CDD" id="cd16962">
    <property type="entry name" value="RuvC"/>
    <property type="match status" value="1"/>
</dbReference>
<dbReference type="FunFam" id="3.30.420.10:FF:000002">
    <property type="entry name" value="Crossover junction endodeoxyribonuclease RuvC"/>
    <property type="match status" value="1"/>
</dbReference>
<dbReference type="Gene3D" id="3.30.420.10">
    <property type="entry name" value="Ribonuclease H-like superfamily/Ribonuclease H"/>
    <property type="match status" value="1"/>
</dbReference>
<dbReference type="HAMAP" id="MF_00034">
    <property type="entry name" value="RuvC"/>
    <property type="match status" value="1"/>
</dbReference>
<dbReference type="InterPro" id="IPR012337">
    <property type="entry name" value="RNaseH-like_sf"/>
</dbReference>
<dbReference type="InterPro" id="IPR036397">
    <property type="entry name" value="RNaseH_sf"/>
</dbReference>
<dbReference type="InterPro" id="IPR020563">
    <property type="entry name" value="X-over_junc_endoDNase_Mg_BS"/>
</dbReference>
<dbReference type="InterPro" id="IPR002176">
    <property type="entry name" value="X-over_junc_endoDNase_RuvC"/>
</dbReference>
<dbReference type="NCBIfam" id="TIGR00228">
    <property type="entry name" value="ruvC"/>
    <property type="match status" value="1"/>
</dbReference>
<dbReference type="PANTHER" id="PTHR30194">
    <property type="entry name" value="CROSSOVER JUNCTION ENDODEOXYRIBONUCLEASE RUVC"/>
    <property type="match status" value="1"/>
</dbReference>
<dbReference type="PANTHER" id="PTHR30194:SF3">
    <property type="entry name" value="CROSSOVER JUNCTION ENDODEOXYRIBONUCLEASE RUVC"/>
    <property type="match status" value="1"/>
</dbReference>
<dbReference type="Pfam" id="PF02075">
    <property type="entry name" value="RuvC"/>
    <property type="match status" value="1"/>
</dbReference>
<dbReference type="PRINTS" id="PR00696">
    <property type="entry name" value="RSOLVASERUVC"/>
</dbReference>
<dbReference type="SUPFAM" id="SSF53098">
    <property type="entry name" value="Ribonuclease H-like"/>
    <property type="match status" value="1"/>
</dbReference>
<dbReference type="PROSITE" id="PS01321">
    <property type="entry name" value="RUVC"/>
    <property type="match status" value="1"/>
</dbReference>
<gene>
    <name evidence="1" type="primary">ruvC</name>
    <name type="ordered locus">ABBFA_001966</name>
</gene>
<organism>
    <name type="scientific">Acinetobacter baumannii (strain AB307-0294)</name>
    <dbReference type="NCBI Taxonomy" id="557600"/>
    <lineage>
        <taxon>Bacteria</taxon>
        <taxon>Pseudomonadati</taxon>
        <taxon>Pseudomonadota</taxon>
        <taxon>Gammaproteobacteria</taxon>
        <taxon>Moraxellales</taxon>
        <taxon>Moraxellaceae</taxon>
        <taxon>Acinetobacter</taxon>
        <taxon>Acinetobacter calcoaceticus/baumannii complex</taxon>
    </lineage>
</organism>
<keyword id="KW-0963">Cytoplasm</keyword>
<keyword id="KW-0227">DNA damage</keyword>
<keyword id="KW-0233">DNA recombination</keyword>
<keyword id="KW-0234">DNA repair</keyword>
<keyword id="KW-0238">DNA-binding</keyword>
<keyword id="KW-0255">Endonuclease</keyword>
<keyword id="KW-0378">Hydrolase</keyword>
<keyword id="KW-0460">Magnesium</keyword>
<keyword id="KW-0479">Metal-binding</keyword>
<keyword id="KW-0540">Nuclease</keyword>
<feature type="chain" id="PRO_1000195229" description="Crossover junction endodeoxyribonuclease RuvC">
    <location>
        <begin position="1"/>
        <end position="181"/>
    </location>
</feature>
<feature type="active site" evidence="1">
    <location>
        <position position="8"/>
    </location>
</feature>
<feature type="active site" evidence="1">
    <location>
        <position position="67"/>
    </location>
</feature>
<feature type="active site" evidence="1">
    <location>
        <position position="139"/>
    </location>
</feature>
<feature type="binding site" evidence="1">
    <location>
        <position position="8"/>
    </location>
    <ligand>
        <name>Mg(2+)</name>
        <dbReference type="ChEBI" id="CHEBI:18420"/>
        <label>1</label>
    </ligand>
</feature>
<feature type="binding site" evidence="1">
    <location>
        <position position="67"/>
    </location>
    <ligand>
        <name>Mg(2+)</name>
        <dbReference type="ChEBI" id="CHEBI:18420"/>
        <label>2</label>
    </ligand>
</feature>
<feature type="binding site" evidence="1">
    <location>
        <position position="139"/>
    </location>
    <ligand>
        <name>Mg(2+)</name>
        <dbReference type="ChEBI" id="CHEBI:18420"/>
        <label>1</label>
    </ligand>
</feature>
<proteinExistence type="inferred from homology"/>
<protein>
    <recommendedName>
        <fullName evidence="1">Crossover junction endodeoxyribonuclease RuvC</fullName>
        <ecNumber evidence="1">3.1.21.10</ecNumber>
    </recommendedName>
    <alternativeName>
        <fullName evidence="1">Holliday junction nuclease RuvC</fullName>
    </alternativeName>
    <alternativeName>
        <fullName evidence="1">Holliday junction resolvase RuvC</fullName>
    </alternativeName>
</protein>
<evidence type="ECO:0000255" key="1">
    <source>
        <dbReference type="HAMAP-Rule" id="MF_00034"/>
    </source>
</evidence>
<reference key="1">
    <citation type="journal article" date="2008" name="J. Bacteriol.">
        <title>Comparative genome sequence analysis of multidrug-resistant Acinetobacter baumannii.</title>
        <authorList>
            <person name="Adams M.D."/>
            <person name="Goglin K."/>
            <person name="Molyneaux N."/>
            <person name="Hujer K.M."/>
            <person name="Lavender H."/>
            <person name="Jamison J.J."/>
            <person name="MacDonald I.J."/>
            <person name="Martin K.M."/>
            <person name="Russo T."/>
            <person name="Campagnari A.A."/>
            <person name="Hujer A.M."/>
            <person name="Bonomo R.A."/>
            <person name="Gill S.R."/>
        </authorList>
    </citation>
    <scope>NUCLEOTIDE SEQUENCE [LARGE SCALE GENOMIC DNA]</scope>
    <source>
        <strain>AB307-0294</strain>
    </source>
</reference>
<sequence length="181" mass="19446">MPLIIGIDPGSRLTGYGIIEKDGSKLRFVDAGTIRTETQEMPERLKRIFAGVERIVKFHGPTEAAVEQVFMAQNPDSALKLGQARGAAIAALVNLDLQVAEYTARQIKQSVVGYGAADKEQVQMMVMRLLNLTIKPQADAADALAAAICHAHASGSMSKLTVLNALGGMARGRSRSSSRRR</sequence>
<name>RUVC_ACIB3</name>
<comment type="function">
    <text evidence="1">The RuvA-RuvB-RuvC complex processes Holliday junction (HJ) DNA during genetic recombination and DNA repair. Endonuclease that resolves HJ intermediates. Cleaves cruciform DNA by making single-stranded nicks across the HJ at symmetrical positions within the homologous arms, yielding a 5'-phosphate and a 3'-hydroxyl group; requires a central core of homology in the junction. The consensus cleavage sequence is 5'-(A/T)TT(C/G)-3'. Cleavage occurs on the 3'-side of the TT dinucleotide at the point of strand exchange. HJ branch migration catalyzed by RuvA-RuvB allows RuvC to scan DNA until it finds its consensus sequence, where it cleaves and resolves the cruciform DNA.</text>
</comment>
<comment type="catalytic activity">
    <reaction evidence="1">
        <text>Endonucleolytic cleavage at a junction such as a reciprocal single-stranded crossover between two homologous DNA duplexes (Holliday junction).</text>
        <dbReference type="EC" id="3.1.21.10"/>
    </reaction>
</comment>
<comment type="cofactor">
    <cofactor evidence="1">
        <name>Mg(2+)</name>
        <dbReference type="ChEBI" id="CHEBI:18420"/>
    </cofactor>
    <text evidence="1">Binds 2 Mg(2+) ion per subunit.</text>
</comment>
<comment type="subunit">
    <text evidence="1">Homodimer which binds Holliday junction (HJ) DNA. The HJ becomes 2-fold symmetrical on binding to RuvC with unstacked arms; it has a different conformation from HJ DNA in complex with RuvA. In the full resolvosome a probable DNA-RuvA(4)-RuvB(12)-RuvC(2) complex forms which resolves the HJ.</text>
</comment>
<comment type="subcellular location">
    <subcellularLocation>
        <location evidence="1">Cytoplasm</location>
    </subcellularLocation>
</comment>
<comment type="similarity">
    <text evidence="1">Belongs to the RuvC family.</text>
</comment>